<reference key="1">
    <citation type="submission" date="2007-02" db="EMBL/GenBank/DDBJ databases">
        <title>Complete sequence of Clostridium thermocellum ATCC 27405.</title>
        <authorList>
            <consortium name="US DOE Joint Genome Institute"/>
            <person name="Copeland A."/>
            <person name="Lucas S."/>
            <person name="Lapidus A."/>
            <person name="Barry K."/>
            <person name="Detter J.C."/>
            <person name="Glavina del Rio T."/>
            <person name="Hammon N."/>
            <person name="Israni S."/>
            <person name="Dalin E."/>
            <person name="Tice H."/>
            <person name="Pitluck S."/>
            <person name="Chertkov O."/>
            <person name="Brettin T."/>
            <person name="Bruce D."/>
            <person name="Han C."/>
            <person name="Tapia R."/>
            <person name="Gilna P."/>
            <person name="Schmutz J."/>
            <person name="Larimer F."/>
            <person name="Land M."/>
            <person name="Hauser L."/>
            <person name="Kyrpides N."/>
            <person name="Mikhailova N."/>
            <person name="Wu J.H.D."/>
            <person name="Newcomb M."/>
            <person name="Richardson P."/>
        </authorList>
    </citation>
    <scope>NUCLEOTIDE SEQUENCE [LARGE SCALE GENOMIC DNA]</scope>
    <source>
        <strain>ATCC 27405 / DSM 1237 / JCM 9322 / NBRC 103400 / NCIMB 10682 / NRRL B-4536 / VPI 7372</strain>
    </source>
</reference>
<sequence length="159" mass="18328">MRITIIAVGKIKEKYLKEGINEYSKRLSRYCKLEIIEVEDEHAPDNLSSLEEQQVKKREAERVVKRLKEGTLLVVLDVRGSKMSSEELARKLESFFISGKSHVTFVIGGSLGIDKELLNMADFSLSLSDMTFPHQLTRLILLEQLYRSFKIINGEPYHR</sequence>
<gene>
    <name evidence="1" type="primary">rlmH</name>
    <name type="ordered locus">Cthe_2326</name>
</gene>
<accession>A3DHU9</accession>
<evidence type="ECO:0000255" key="1">
    <source>
        <dbReference type="HAMAP-Rule" id="MF_00658"/>
    </source>
</evidence>
<organism>
    <name type="scientific">Acetivibrio thermocellus (strain ATCC 27405 / DSM 1237 / JCM 9322 / NBRC 103400 / NCIMB 10682 / NRRL B-4536 / VPI 7372)</name>
    <name type="common">Clostridium thermocellum</name>
    <dbReference type="NCBI Taxonomy" id="203119"/>
    <lineage>
        <taxon>Bacteria</taxon>
        <taxon>Bacillati</taxon>
        <taxon>Bacillota</taxon>
        <taxon>Clostridia</taxon>
        <taxon>Eubacteriales</taxon>
        <taxon>Oscillospiraceae</taxon>
        <taxon>Acetivibrio</taxon>
    </lineage>
</organism>
<comment type="function">
    <text evidence="1">Specifically methylates the pseudouridine at position 1915 (m3Psi1915) in 23S rRNA.</text>
</comment>
<comment type="catalytic activity">
    <reaction evidence="1">
        <text>pseudouridine(1915) in 23S rRNA + S-adenosyl-L-methionine = N(3)-methylpseudouridine(1915) in 23S rRNA + S-adenosyl-L-homocysteine + H(+)</text>
        <dbReference type="Rhea" id="RHEA:42752"/>
        <dbReference type="Rhea" id="RHEA-COMP:10221"/>
        <dbReference type="Rhea" id="RHEA-COMP:10222"/>
        <dbReference type="ChEBI" id="CHEBI:15378"/>
        <dbReference type="ChEBI" id="CHEBI:57856"/>
        <dbReference type="ChEBI" id="CHEBI:59789"/>
        <dbReference type="ChEBI" id="CHEBI:65314"/>
        <dbReference type="ChEBI" id="CHEBI:74486"/>
        <dbReference type="EC" id="2.1.1.177"/>
    </reaction>
</comment>
<comment type="subunit">
    <text evidence="1">Homodimer.</text>
</comment>
<comment type="subcellular location">
    <subcellularLocation>
        <location evidence="1">Cytoplasm</location>
    </subcellularLocation>
</comment>
<comment type="similarity">
    <text evidence="1">Belongs to the RNA methyltransferase RlmH family.</text>
</comment>
<protein>
    <recommendedName>
        <fullName evidence="1">Ribosomal RNA large subunit methyltransferase H</fullName>
        <ecNumber evidence="1">2.1.1.177</ecNumber>
    </recommendedName>
    <alternativeName>
        <fullName evidence="1">23S rRNA (pseudouridine1915-N3)-methyltransferase</fullName>
    </alternativeName>
    <alternativeName>
        <fullName evidence="1">23S rRNA m3Psi1915 methyltransferase</fullName>
    </alternativeName>
    <alternativeName>
        <fullName evidence="1">rRNA (pseudouridine-N3-)-methyltransferase RlmH</fullName>
    </alternativeName>
</protein>
<keyword id="KW-0963">Cytoplasm</keyword>
<keyword id="KW-0489">Methyltransferase</keyword>
<keyword id="KW-1185">Reference proteome</keyword>
<keyword id="KW-0698">rRNA processing</keyword>
<keyword id="KW-0949">S-adenosyl-L-methionine</keyword>
<keyword id="KW-0808">Transferase</keyword>
<dbReference type="EC" id="2.1.1.177" evidence="1"/>
<dbReference type="EMBL" id="CP000568">
    <property type="protein sequence ID" value="ABN53528.1"/>
    <property type="molecule type" value="Genomic_DNA"/>
</dbReference>
<dbReference type="RefSeq" id="WP_020457768.1">
    <property type="nucleotide sequence ID" value="NC_009012.1"/>
</dbReference>
<dbReference type="SMR" id="A3DHU9"/>
<dbReference type="STRING" id="203119.Cthe_2326"/>
<dbReference type="GeneID" id="35804134"/>
<dbReference type="KEGG" id="cth:Cthe_2326"/>
<dbReference type="eggNOG" id="COG1576">
    <property type="taxonomic scope" value="Bacteria"/>
</dbReference>
<dbReference type="HOGENOM" id="CLU_100552_0_0_9"/>
<dbReference type="OrthoDB" id="9806643at2"/>
<dbReference type="Proteomes" id="UP000002145">
    <property type="component" value="Chromosome"/>
</dbReference>
<dbReference type="GO" id="GO:0005737">
    <property type="term" value="C:cytoplasm"/>
    <property type="evidence" value="ECO:0007669"/>
    <property type="project" value="UniProtKB-SubCell"/>
</dbReference>
<dbReference type="GO" id="GO:0070038">
    <property type="term" value="F:rRNA (pseudouridine-N3-)-methyltransferase activity"/>
    <property type="evidence" value="ECO:0007669"/>
    <property type="project" value="UniProtKB-UniRule"/>
</dbReference>
<dbReference type="CDD" id="cd18081">
    <property type="entry name" value="RlmH-like"/>
    <property type="match status" value="1"/>
</dbReference>
<dbReference type="Gene3D" id="3.40.1280.10">
    <property type="match status" value="1"/>
</dbReference>
<dbReference type="HAMAP" id="MF_00658">
    <property type="entry name" value="23SrRNA_methyltr_H"/>
    <property type="match status" value="1"/>
</dbReference>
<dbReference type="InterPro" id="IPR029028">
    <property type="entry name" value="Alpha/beta_knot_MTases"/>
</dbReference>
<dbReference type="InterPro" id="IPR003742">
    <property type="entry name" value="RlmH-like"/>
</dbReference>
<dbReference type="InterPro" id="IPR029026">
    <property type="entry name" value="tRNA_m1G_MTases_N"/>
</dbReference>
<dbReference type="NCBIfam" id="NF000985">
    <property type="entry name" value="PRK00103.1-3"/>
    <property type="match status" value="1"/>
</dbReference>
<dbReference type="NCBIfam" id="NF000986">
    <property type="entry name" value="PRK00103.1-4"/>
    <property type="match status" value="1"/>
</dbReference>
<dbReference type="NCBIfam" id="TIGR00246">
    <property type="entry name" value="tRNA_RlmH_YbeA"/>
    <property type="match status" value="1"/>
</dbReference>
<dbReference type="PANTHER" id="PTHR33603">
    <property type="entry name" value="METHYLTRANSFERASE"/>
    <property type="match status" value="1"/>
</dbReference>
<dbReference type="PANTHER" id="PTHR33603:SF1">
    <property type="entry name" value="RIBOSOMAL RNA LARGE SUBUNIT METHYLTRANSFERASE H"/>
    <property type="match status" value="1"/>
</dbReference>
<dbReference type="Pfam" id="PF02590">
    <property type="entry name" value="SPOUT_MTase"/>
    <property type="match status" value="1"/>
</dbReference>
<dbReference type="PIRSF" id="PIRSF004505">
    <property type="entry name" value="MT_bac"/>
    <property type="match status" value="1"/>
</dbReference>
<dbReference type="SUPFAM" id="SSF75217">
    <property type="entry name" value="alpha/beta knot"/>
    <property type="match status" value="1"/>
</dbReference>
<name>RLMH_ACET2</name>
<proteinExistence type="inferred from homology"/>
<feature type="chain" id="PRO_1000061777" description="Ribosomal RNA large subunit methyltransferase H">
    <location>
        <begin position="1"/>
        <end position="159"/>
    </location>
</feature>
<feature type="binding site" evidence="1">
    <location>
        <position position="76"/>
    </location>
    <ligand>
        <name>S-adenosyl-L-methionine</name>
        <dbReference type="ChEBI" id="CHEBI:59789"/>
    </ligand>
</feature>
<feature type="binding site" evidence="1">
    <location>
        <position position="108"/>
    </location>
    <ligand>
        <name>S-adenosyl-L-methionine</name>
        <dbReference type="ChEBI" id="CHEBI:59789"/>
    </ligand>
</feature>
<feature type="binding site" evidence="1">
    <location>
        <begin position="127"/>
        <end position="132"/>
    </location>
    <ligand>
        <name>S-adenosyl-L-methionine</name>
        <dbReference type="ChEBI" id="CHEBI:59789"/>
    </ligand>
</feature>